<organismHost>
    <name type="scientific">Bos taurus</name>
    <name type="common">Bovine</name>
    <dbReference type="NCBI Taxonomy" id="9913"/>
</organismHost>
<accession>P68458</accession>
<accession>P21024</accession>
<accession>Q76ZU3</accession>
<comment type="function">
    <text evidence="2 5">Component of the entry fusion complex (EFC), which consists of 11 proteins. During cell infection, this complex mediates entry of the virion core into the host cytoplasm by a two-step mechanism consisting of lipid mixing of the viral and cellular membranes and subsequent pore formation.</text>
</comment>
<comment type="subunit">
    <text evidence="2 3 5">Interacts with OPG099/L5 (PubMed:21295816, PubMed:34076488). Component of the entry fusion complex (EFC) composed of OPG053/F9, OPG076/O3, OPG086/G3, OPG094/G9, OPG095/L1, OPG099/L5, OPG107/H2, OPG143/A16, OPG104/J5, OPG147/A21 and OPG155/A28 (PubMed:16339313, PubMed:34076488). Except for OPG095/L1 and OPG053/F9, each of the EFC proteins is required for assembly or stability of the complex (PubMed:34076488).</text>
</comment>
<comment type="subcellular location">
    <subcellularLocation>
        <location evidence="7">Virion membrane</location>
        <topology evidence="6">Single-pass membrane protein</topology>
    </subcellularLocation>
    <text evidence="7">Component of the mature virion (MV) membrane.</text>
</comment>
<comment type="induction">
    <text evidence="4">Expressed in the late phase of the viral replicative cycle.</text>
</comment>
<comment type="PTM">
    <text evidence="7">Unglycosylated because produced in viral factories instead of the classic ER -Golgi route.</text>
</comment>
<comment type="similarity">
    <text evidence="6">Belongs to the orthopoxvirus OPG086 family.</text>
</comment>
<reference key="1">
    <citation type="journal article" date="1991" name="Virology">
        <title>Genetic and molecular biological characterization of a vaccinia virus gene which renders the virus dependent on isatin-beta-thiosemicarbazone (IBT).</title>
        <authorList>
            <person name="Meis R.J."/>
            <person name="Condit R.C."/>
        </authorList>
    </citation>
    <scope>NUCLEOTIDE SEQUENCE [GENOMIC DNA]</scope>
</reference>
<reference key="2">
    <citation type="submission" date="2003-02" db="EMBL/GenBank/DDBJ databases">
        <title>Sequencing of the coding region of Vaccinia-WR to an average 9-fold redundancy and an error rate of 0.16/10kb.</title>
        <authorList>
            <person name="Esposito J.J."/>
            <person name="Frace A.M."/>
            <person name="Sammons S.A."/>
            <person name="Olsen-Rasmussen M."/>
            <person name="Osborne J."/>
            <person name="Wohlhueter R."/>
        </authorList>
    </citation>
    <scope>NUCLEOTIDE SEQUENCE [LARGE SCALE GENOMIC DNA]</scope>
</reference>
<reference key="3">
    <citation type="journal article" date="2005" name="Proc. Natl. Acad. Sci. U.S.A.">
        <title>Poxvirus multiprotein entry-fusion complex.</title>
        <authorList>
            <person name="Senkevich T.G."/>
            <person name="Ojeda S."/>
            <person name="Townsley A."/>
            <person name="Nelson G.E."/>
            <person name="Moss B."/>
        </authorList>
    </citation>
    <scope>IDENTIFICATION IN THE ENTRY-FUSION COMPLEX</scope>
    <scope>FUNCTION</scope>
</reference>
<reference key="4">
    <citation type="journal article" date="2011" name="Virology">
        <title>Interaction between the G3 and L5 proteins of the vaccinia virus entry-fusion complex.</title>
        <authorList>
            <person name="Wolfe C.L."/>
            <person name="Moss B."/>
        </authorList>
    </citation>
    <scope>INTERACTION WITH OPG099/L5</scope>
</reference>
<reference key="5">
    <citation type="journal article" date="2015" name="J. Virol.">
        <title>Deciphering poxvirus gene expression by RNA sequencing and ribosome profiling.</title>
        <authorList>
            <person name="Yang Z."/>
            <person name="Cao S."/>
            <person name="Martens C.A."/>
            <person name="Porcella S.F."/>
            <person name="Xie Z."/>
            <person name="Ma M."/>
            <person name="Shen B."/>
            <person name="Moss B."/>
        </authorList>
    </citation>
    <scope>INDUCTION</scope>
</reference>
<reference key="6">
    <citation type="journal article" date="2021" name="J. Virol.">
        <title>Insights into the Organization of the Poxvirus Multicomponent Entry-Fusion Complex from Proximity Analyses in Living Infected Cells.</title>
        <authorList>
            <person name="Schin A.M."/>
            <person name="Diesterbeck U.S."/>
            <person name="Moss B."/>
        </authorList>
    </citation>
    <scope>FUNCTION</scope>
    <scope>INTERACTION WITH OPG099/L5</scope>
</reference>
<gene>
    <name type="primary">OPG086</name>
    <name type="ordered locus">VACWR079</name>
    <name type="ORF">G3L</name>
</gene>
<sequence>MASLLYLILFLLFVCISYYFTYYPTNKLQAAVMETDRENAIIRQRNDEIPTRTLDTAIFTDASTVASAQIHLYYNSNIGKIIMSLNGKKHTFNLYDDNDIRTLLPILLLSK</sequence>
<evidence type="ECO:0000255" key="1"/>
<evidence type="ECO:0000269" key="2">
    <source>
    </source>
</evidence>
<evidence type="ECO:0000269" key="3">
    <source>
    </source>
</evidence>
<evidence type="ECO:0000269" key="4">
    <source>
    </source>
</evidence>
<evidence type="ECO:0000269" key="5">
    <source>
    </source>
</evidence>
<evidence type="ECO:0000305" key="6"/>
<evidence type="ECO:0000305" key="7">
    <source>
    </source>
</evidence>
<evidence type="ECO:0007829" key="8">
    <source>
        <dbReference type="PDB" id="7YTT"/>
    </source>
</evidence>
<evidence type="ECO:0007829" key="9">
    <source>
        <dbReference type="PDB" id="7YTU"/>
    </source>
</evidence>
<feature type="chain" id="PRO_0000099528" description="Entry-fusion complex protein OPG086">
    <location>
        <begin position="1"/>
        <end position="111"/>
    </location>
</feature>
<feature type="transmembrane region" description="Helical; Signal-anchor" evidence="1">
    <location>
        <begin position="1"/>
        <end position="21"/>
    </location>
</feature>
<feature type="topological domain" description="Virion surface" evidence="1">
    <location>
        <begin position="22"/>
        <end position="111"/>
    </location>
</feature>
<feature type="helix" evidence="8">
    <location>
        <begin position="42"/>
        <end position="46"/>
    </location>
</feature>
<feature type="strand" evidence="9">
    <location>
        <begin position="52"/>
        <end position="61"/>
    </location>
</feature>
<feature type="strand" evidence="9">
    <location>
        <begin position="64"/>
        <end position="75"/>
    </location>
</feature>
<feature type="turn" evidence="9">
    <location>
        <begin position="76"/>
        <end position="79"/>
    </location>
</feature>
<feature type="strand" evidence="9">
    <location>
        <begin position="80"/>
        <end position="85"/>
    </location>
</feature>
<feature type="strand" evidence="9">
    <location>
        <begin position="88"/>
        <end position="93"/>
    </location>
</feature>
<feature type="helix" evidence="9">
    <location>
        <begin position="97"/>
        <end position="108"/>
    </location>
</feature>
<keyword id="KW-0002">3D-structure</keyword>
<keyword id="KW-1169">Fusion of virus membrane with host cell membrane</keyword>
<keyword id="KW-1168">Fusion of virus membrane with host membrane</keyword>
<keyword id="KW-0426">Late protein</keyword>
<keyword id="KW-0472">Membrane</keyword>
<keyword id="KW-1185">Reference proteome</keyword>
<keyword id="KW-0735">Signal-anchor</keyword>
<keyword id="KW-0812">Transmembrane</keyword>
<keyword id="KW-1133">Transmembrane helix</keyword>
<keyword id="KW-0261">Viral envelope protein</keyword>
<keyword id="KW-1162">Viral penetration into host cytoplasm</keyword>
<keyword id="KW-0946">Virion</keyword>
<keyword id="KW-1160">Virus entry into host cell</keyword>
<name>PG086_VACCW</name>
<proteinExistence type="evidence at protein level"/>
<protein>
    <recommendedName>
        <fullName>Entry-fusion complex protein OPG086</fullName>
        <shortName>EFC protein OPG086</shortName>
    </recommendedName>
</protein>
<dbReference type="EMBL" id="J03399">
    <property type="protein sequence ID" value="AAB59812.1"/>
    <property type="molecule type" value="Genomic_DNA"/>
</dbReference>
<dbReference type="EMBL" id="AY243312">
    <property type="protein sequence ID" value="AAO89358.1"/>
    <property type="molecule type" value="Genomic_DNA"/>
</dbReference>
<dbReference type="RefSeq" id="YP_232961.1">
    <property type="nucleotide sequence ID" value="NC_006998.1"/>
</dbReference>
<dbReference type="PDB" id="7YTT">
    <property type="method" value="X-ray"/>
    <property type="resolution" value="1.81 A"/>
    <property type="chains" value="A=22-111"/>
</dbReference>
<dbReference type="PDB" id="7YTU">
    <property type="method" value="X-ray"/>
    <property type="resolution" value="1.50 A"/>
    <property type="chains" value="A=22-111"/>
</dbReference>
<dbReference type="PDBsum" id="7YTT"/>
<dbReference type="PDBsum" id="7YTU"/>
<dbReference type="SMR" id="P68458"/>
<dbReference type="TCDB" id="1.G.11.1.1">
    <property type="family name" value="the poxvirus cell entry protein complex (pep-c) family"/>
</dbReference>
<dbReference type="DNASU" id="3707535"/>
<dbReference type="GeneID" id="3707535"/>
<dbReference type="KEGG" id="vg:3707535"/>
<dbReference type="Proteomes" id="UP000000344">
    <property type="component" value="Genome"/>
</dbReference>
<dbReference type="GO" id="GO:0016020">
    <property type="term" value="C:membrane"/>
    <property type="evidence" value="ECO:0007669"/>
    <property type="project" value="UniProtKB-KW"/>
</dbReference>
<dbReference type="GO" id="GO:0019031">
    <property type="term" value="C:viral envelope"/>
    <property type="evidence" value="ECO:0007669"/>
    <property type="project" value="UniProtKB-KW"/>
</dbReference>
<dbReference type="GO" id="GO:0055036">
    <property type="term" value="C:virion membrane"/>
    <property type="evidence" value="ECO:0007669"/>
    <property type="project" value="UniProtKB-SubCell"/>
</dbReference>
<dbReference type="GO" id="GO:0019064">
    <property type="term" value="P:fusion of virus membrane with host plasma membrane"/>
    <property type="evidence" value="ECO:0007669"/>
    <property type="project" value="UniProtKB-KW"/>
</dbReference>
<dbReference type="GO" id="GO:0046718">
    <property type="term" value="P:symbiont entry into host cell"/>
    <property type="evidence" value="ECO:0007669"/>
    <property type="project" value="UniProtKB-KW"/>
</dbReference>
<dbReference type="InterPro" id="IPR010367">
    <property type="entry name" value="Poxvirus_G3"/>
</dbReference>
<dbReference type="Pfam" id="PF06129">
    <property type="entry name" value="Chordopox_G3"/>
    <property type="match status" value="1"/>
</dbReference>
<organism>
    <name type="scientific">Vaccinia virus (strain Western Reserve)</name>
    <name type="common">VACV</name>
    <name type="synonym">Vaccinia virus (strain WR)</name>
    <dbReference type="NCBI Taxonomy" id="10254"/>
    <lineage>
        <taxon>Viruses</taxon>
        <taxon>Varidnaviria</taxon>
        <taxon>Bamfordvirae</taxon>
        <taxon>Nucleocytoviricota</taxon>
        <taxon>Pokkesviricetes</taxon>
        <taxon>Chitovirales</taxon>
        <taxon>Poxviridae</taxon>
        <taxon>Chordopoxvirinae</taxon>
        <taxon>Orthopoxvirus</taxon>
        <taxon>Vaccinia virus</taxon>
    </lineage>
</organism>